<gene>
    <name type="primary">OR8U8</name>
</gene>
<evidence type="ECO:0000255" key="1"/>
<evidence type="ECO:0000255" key="2">
    <source>
        <dbReference type="PROSITE-ProRule" id="PRU00521"/>
    </source>
</evidence>
<evidence type="ECO:0000305" key="3"/>
<dbReference type="EMBL" id="CH471076">
    <property type="protein sequence ID" value="EAW73711.1"/>
    <property type="molecule type" value="Genomic_DNA"/>
</dbReference>
<dbReference type="SMR" id="P0C7N1"/>
<dbReference type="FunCoup" id="P0C7N1">
    <property type="interactions" value="886"/>
</dbReference>
<dbReference type="IntAct" id="P0C7N1">
    <property type="interactions" value="1"/>
</dbReference>
<dbReference type="GlyCosmos" id="P0C7N1">
    <property type="glycosylation" value="1 site, No reported glycans"/>
</dbReference>
<dbReference type="GlyGen" id="P0C7N1">
    <property type="glycosylation" value="1 site"/>
</dbReference>
<dbReference type="BioMuta" id="OR8U8"/>
<dbReference type="DMDM" id="190359931"/>
<dbReference type="jPOST" id="P0C7N1"/>
<dbReference type="MassIVE" id="P0C7N1"/>
<dbReference type="PeptideAtlas" id="P0C7N1"/>
<dbReference type="DNASU" id="504189"/>
<dbReference type="AGR" id="HGNC:27538"/>
<dbReference type="DisGeNET" id="504189"/>
<dbReference type="GeneCards" id="OR8U8"/>
<dbReference type="HGNC" id="HGNC:27538">
    <property type="gene designation" value="OR8U8"/>
</dbReference>
<dbReference type="neXtProt" id="NX_P0C7N1"/>
<dbReference type="PharmGKB" id="PA142671222"/>
<dbReference type="InParanoid" id="P0C7N1"/>
<dbReference type="PAN-GO" id="P0C7N1">
    <property type="GO annotations" value="4 GO annotations based on evolutionary models"/>
</dbReference>
<dbReference type="PhylomeDB" id="P0C7N1"/>
<dbReference type="PathwayCommons" id="P0C7N1"/>
<dbReference type="Reactome" id="R-HSA-381753">
    <property type="pathway name" value="Olfactory Signaling Pathway"/>
</dbReference>
<dbReference type="Reactome" id="R-HSA-9752946">
    <property type="pathway name" value="Expression and translocation of olfactory receptors"/>
</dbReference>
<dbReference type="Pharos" id="P0C7N1">
    <property type="development level" value="Tdark"/>
</dbReference>
<dbReference type="PRO" id="PR:P0C7N1"/>
<dbReference type="Proteomes" id="UP000005640">
    <property type="component" value="Unplaced"/>
</dbReference>
<dbReference type="RNAct" id="P0C7N1">
    <property type="molecule type" value="protein"/>
</dbReference>
<dbReference type="GO" id="GO:0005886">
    <property type="term" value="C:plasma membrane"/>
    <property type="evidence" value="ECO:0000304"/>
    <property type="project" value="Reactome"/>
</dbReference>
<dbReference type="GO" id="GO:0004930">
    <property type="term" value="F:G protein-coupled receptor activity"/>
    <property type="evidence" value="ECO:0007669"/>
    <property type="project" value="UniProtKB-KW"/>
</dbReference>
<dbReference type="GO" id="GO:0004984">
    <property type="term" value="F:olfactory receptor activity"/>
    <property type="evidence" value="ECO:0007669"/>
    <property type="project" value="InterPro"/>
</dbReference>
<dbReference type="CDD" id="cd15413">
    <property type="entry name" value="7tmA_OR8K-like"/>
    <property type="match status" value="1"/>
</dbReference>
<dbReference type="FunFam" id="1.10.1220.70:FF:000001">
    <property type="entry name" value="Olfactory receptor"/>
    <property type="match status" value="1"/>
</dbReference>
<dbReference type="FunFam" id="1.20.1070.10:FF:000004">
    <property type="entry name" value="Olfactory receptor"/>
    <property type="match status" value="1"/>
</dbReference>
<dbReference type="Gene3D" id="1.20.1070.10">
    <property type="entry name" value="Rhodopsin 7-helix transmembrane proteins"/>
    <property type="match status" value="1"/>
</dbReference>
<dbReference type="InterPro" id="IPR000276">
    <property type="entry name" value="GPCR_Rhodpsn"/>
</dbReference>
<dbReference type="InterPro" id="IPR017452">
    <property type="entry name" value="GPCR_Rhodpsn_7TM"/>
</dbReference>
<dbReference type="InterPro" id="IPR000725">
    <property type="entry name" value="Olfact_rcpt"/>
</dbReference>
<dbReference type="PANTHER" id="PTHR48018">
    <property type="entry name" value="OLFACTORY RECEPTOR"/>
    <property type="match status" value="1"/>
</dbReference>
<dbReference type="Pfam" id="PF13853">
    <property type="entry name" value="7tm_4"/>
    <property type="match status" value="1"/>
</dbReference>
<dbReference type="PRINTS" id="PR00237">
    <property type="entry name" value="GPCRRHODOPSN"/>
</dbReference>
<dbReference type="PRINTS" id="PR00245">
    <property type="entry name" value="OLFACTORYR"/>
</dbReference>
<dbReference type="SUPFAM" id="SSF81321">
    <property type="entry name" value="Family A G protein-coupled receptor-like"/>
    <property type="match status" value="1"/>
</dbReference>
<dbReference type="PROSITE" id="PS00237">
    <property type="entry name" value="G_PROTEIN_RECEP_F1_1"/>
    <property type="match status" value="1"/>
</dbReference>
<dbReference type="PROSITE" id="PS50262">
    <property type="entry name" value="G_PROTEIN_RECEP_F1_2"/>
    <property type="match status" value="1"/>
</dbReference>
<reference key="1">
    <citation type="submission" date="2005-07" db="EMBL/GenBank/DDBJ databases">
        <authorList>
            <person name="Mural R.J."/>
            <person name="Istrail S."/>
            <person name="Sutton G.G."/>
            <person name="Florea L."/>
            <person name="Halpern A.L."/>
            <person name="Mobarry C.M."/>
            <person name="Lippert R."/>
            <person name="Walenz B."/>
            <person name="Shatkay H."/>
            <person name="Dew I."/>
            <person name="Miller J.R."/>
            <person name="Flanigan M.J."/>
            <person name="Edwards N.J."/>
            <person name="Bolanos R."/>
            <person name="Fasulo D."/>
            <person name="Halldorsson B.V."/>
            <person name="Hannenhalli S."/>
            <person name="Turner R."/>
            <person name="Yooseph S."/>
            <person name="Lu F."/>
            <person name="Nusskern D.R."/>
            <person name="Shue B.C."/>
            <person name="Zheng X.H."/>
            <person name="Zhong F."/>
            <person name="Delcher A.L."/>
            <person name="Huson D.H."/>
            <person name="Kravitz S.A."/>
            <person name="Mouchard L."/>
            <person name="Reinert K."/>
            <person name="Remington K.A."/>
            <person name="Clark A.G."/>
            <person name="Waterman M.S."/>
            <person name="Eichler E.E."/>
            <person name="Adams M.D."/>
            <person name="Hunkapiller M.W."/>
            <person name="Myers E.W."/>
            <person name="Venter J.C."/>
        </authorList>
    </citation>
    <scope>NUCLEOTIDE SEQUENCE [LARGE SCALE GENOMIC DNA]</scope>
</reference>
<comment type="function">
    <text evidence="3">Odorant receptor.</text>
</comment>
<comment type="subcellular location">
    <subcellularLocation>
        <location>Cell membrane</location>
        <topology>Multi-pass membrane protein</topology>
    </subcellularLocation>
</comment>
<comment type="similarity">
    <text evidence="2">Belongs to the G-protein coupled receptor 1 family.</text>
</comment>
<name>OR8U8_HUMAN</name>
<organism>
    <name type="scientific">Homo sapiens</name>
    <name type="common">Human</name>
    <dbReference type="NCBI Taxonomy" id="9606"/>
    <lineage>
        <taxon>Eukaryota</taxon>
        <taxon>Metazoa</taxon>
        <taxon>Chordata</taxon>
        <taxon>Craniata</taxon>
        <taxon>Vertebrata</taxon>
        <taxon>Euteleostomi</taxon>
        <taxon>Mammalia</taxon>
        <taxon>Eutheria</taxon>
        <taxon>Euarchontoglires</taxon>
        <taxon>Primates</taxon>
        <taxon>Haplorrhini</taxon>
        <taxon>Catarrhini</taxon>
        <taxon>Hominidae</taxon>
        <taxon>Homo</taxon>
    </lineage>
</organism>
<keyword id="KW-1003">Cell membrane</keyword>
<keyword id="KW-1015">Disulfide bond</keyword>
<keyword id="KW-0297">G-protein coupled receptor</keyword>
<keyword id="KW-0325">Glycoprotein</keyword>
<keyword id="KW-0472">Membrane</keyword>
<keyword id="KW-0552">Olfaction</keyword>
<keyword id="KW-0675">Receptor</keyword>
<keyword id="KW-1185">Reference proteome</keyword>
<keyword id="KW-0716">Sensory transduction</keyword>
<keyword id="KW-0807">Transducer</keyword>
<keyword id="KW-0812">Transmembrane</keyword>
<keyword id="KW-1133">Transmembrane helix</keyword>
<accession>P0C7N1</accession>
<feature type="chain" id="PRO_0000339640" description="Olfactory receptor 8U8">
    <location>
        <begin position="1"/>
        <end position="319"/>
    </location>
</feature>
<feature type="topological domain" description="Extracellular" evidence="1">
    <location>
        <begin position="1"/>
        <end position="28"/>
    </location>
</feature>
<feature type="transmembrane region" description="Helical; Name=1" evidence="1">
    <location>
        <begin position="29"/>
        <end position="49"/>
    </location>
</feature>
<feature type="topological domain" description="Cytoplasmic" evidence="1">
    <location>
        <begin position="50"/>
        <end position="56"/>
    </location>
</feature>
<feature type="transmembrane region" description="Helical; Name=2" evidence="1">
    <location>
        <begin position="57"/>
        <end position="77"/>
    </location>
</feature>
<feature type="topological domain" description="Extracellular" evidence="1">
    <location>
        <begin position="78"/>
        <end position="97"/>
    </location>
</feature>
<feature type="transmembrane region" description="Helical; Name=3" evidence="1">
    <location>
        <begin position="98"/>
        <end position="118"/>
    </location>
</feature>
<feature type="topological domain" description="Cytoplasmic" evidence="1">
    <location>
        <begin position="119"/>
        <end position="122"/>
    </location>
</feature>
<feature type="transmembrane region" description="Helical; Name=4" evidence="1">
    <location>
        <begin position="123"/>
        <end position="143"/>
    </location>
</feature>
<feature type="topological domain" description="Extracellular" evidence="1">
    <location>
        <begin position="144"/>
        <end position="204"/>
    </location>
</feature>
<feature type="transmembrane region" description="Helical; Name=5" evidence="1">
    <location>
        <begin position="205"/>
        <end position="225"/>
    </location>
</feature>
<feature type="topological domain" description="Cytoplasmic" evidence="1">
    <location>
        <begin position="226"/>
        <end position="239"/>
    </location>
</feature>
<feature type="transmembrane region" description="Helical; Name=6" evidence="1">
    <location>
        <begin position="240"/>
        <end position="260"/>
    </location>
</feature>
<feature type="topological domain" description="Extracellular" evidence="1">
    <location>
        <begin position="261"/>
        <end position="271"/>
    </location>
</feature>
<feature type="transmembrane region" description="Helical; Name=7" evidence="1">
    <location>
        <begin position="272"/>
        <end position="292"/>
    </location>
</feature>
<feature type="topological domain" description="Cytoplasmic" evidence="1">
    <location>
        <begin position="293"/>
        <end position="319"/>
    </location>
</feature>
<feature type="glycosylation site" description="N-linked (GlcNAc...) asparagine" evidence="1">
    <location>
        <position position="5"/>
    </location>
</feature>
<feature type="disulfide bond" evidence="2">
    <location>
        <begin position="97"/>
        <end position="179"/>
    </location>
</feature>
<protein>
    <recommendedName>
        <fullName>Olfactory receptor 8U8</fullName>
    </recommendedName>
</protein>
<sequence length="319" mass="36334">MAHINCTQATEFILVGLTDHQELKMPLFVLFLSIYLFTVVGNLGLILLIRADTSLNTPMYFFLSNLAFVDFCYSSVITPKMLGNFLYKQNVISFDACATQLGCFLTFMVSESLLLASMAYDRYVAICNPLLYMVVMTPGICIQLVAVPYSYSFLMALFHTILTFRLSYCHSNIVNHFYCDDMPLLRLTCSDTRFKQLWILACAGITFICSVLIVFVSYMFIIFAILRMSSAEGRRKAFSTCSSHMLAVTIFYGTLIFMYLQPSSSHSLDADKMASVFYTVIIPMLNPLIYSLRNKDVKDALKKVIINRNHAFIFLKLRK</sequence>
<proteinExistence type="inferred from homology"/>